<gene>
    <name evidence="1" type="primary">metN1</name>
    <name type="ordered locus">OB2100</name>
</gene>
<evidence type="ECO:0000255" key="1">
    <source>
        <dbReference type="HAMAP-Rule" id="MF_01719"/>
    </source>
</evidence>
<evidence type="ECO:0000305" key="2"/>
<organism>
    <name type="scientific">Oceanobacillus iheyensis (strain DSM 14371 / CIP 107618 / JCM 11309 / KCTC 3954 / HTE831)</name>
    <dbReference type="NCBI Taxonomy" id="221109"/>
    <lineage>
        <taxon>Bacteria</taxon>
        <taxon>Bacillati</taxon>
        <taxon>Bacillota</taxon>
        <taxon>Bacilli</taxon>
        <taxon>Bacillales</taxon>
        <taxon>Bacillaceae</taxon>
        <taxon>Oceanobacillus</taxon>
    </lineage>
</organism>
<comment type="function">
    <text evidence="1">Part of the ABC transporter complex MetNIQ involved in methionine import. Responsible for energy coupling to the transport system.</text>
</comment>
<comment type="catalytic activity">
    <reaction evidence="1">
        <text>L-methionine(out) + ATP + H2O = L-methionine(in) + ADP + phosphate + H(+)</text>
        <dbReference type="Rhea" id="RHEA:29779"/>
        <dbReference type="ChEBI" id="CHEBI:15377"/>
        <dbReference type="ChEBI" id="CHEBI:15378"/>
        <dbReference type="ChEBI" id="CHEBI:30616"/>
        <dbReference type="ChEBI" id="CHEBI:43474"/>
        <dbReference type="ChEBI" id="CHEBI:57844"/>
        <dbReference type="ChEBI" id="CHEBI:456216"/>
        <dbReference type="EC" id="7.4.2.11"/>
    </reaction>
</comment>
<comment type="catalytic activity">
    <reaction evidence="1">
        <text>D-methionine(out) + ATP + H2O = D-methionine(in) + ADP + phosphate + H(+)</text>
        <dbReference type="Rhea" id="RHEA:29767"/>
        <dbReference type="ChEBI" id="CHEBI:15377"/>
        <dbReference type="ChEBI" id="CHEBI:15378"/>
        <dbReference type="ChEBI" id="CHEBI:30616"/>
        <dbReference type="ChEBI" id="CHEBI:43474"/>
        <dbReference type="ChEBI" id="CHEBI:57932"/>
        <dbReference type="ChEBI" id="CHEBI:456216"/>
        <dbReference type="EC" id="7.4.2.11"/>
    </reaction>
</comment>
<comment type="subunit">
    <text evidence="1">The complex is composed of two ATP-binding proteins (MetN), two transmembrane proteins (MetI) and a solute-binding protein (MetQ).</text>
</comment>
<comment type="subcellular location">
    <subcellularLocation>
        <location evidence="1">Cell membrane</location>
        <topology evidence="1">Peripheral membrane protein</topology>
    </subcellularLocation>
</comment>
<comment type="similarity">
    <text evidence="1">Belongs to the ABC transporter superfamily. Methionine importer (TC 3.A.1.24) family.</text>
</comment>
<comment type="sequence caution" evidence="2">
    <conflict type="erroneous initiation">
        <sequence resource="EMBL-CDS" id="BAC14056"/>
    </conflict>
</comment>
<reference key="1">
    <citation type="journal article" date="2002" name="Nucleic Acids Res.">
        <title>Genome sequence of Oceanobacillus iheyensis isolated from the Iheya Ridge and its unexpected adaptive capabilities to extreme environments.</title>
        <authorList>
            <person name="Takami H."/>
            <person name="Takaki Y."/>
            <person name="Uchiyama I."/>
        </authorList>
    </citation>
    <scope>NUCLEOTIDE SEQUENCE [LARGE SCALE GENOMIC DNA]</scope>
    <source>
        <strain>DSM 14371 / CIP 107618 / JCM 11309 / KCTC 3954 / HTE831</strain>
    </source>
</reference>
<dbReference type="EC" id="7.4.2.11" evidence="1"/>
<dbReference type="EMBL" id="BA000028">
    <property type="protein sequence ID" value="BAC14056.1"/>
    <property type="status" value="ALT_INIT"/>
    <property type="molecule type" value="Genomic_DNA"/>
</dbReference>
<dbReference type="RefSeq" id="WP_041544203.1">
    <property type="nucleotide sequence ID" value="NC_004193.1"/>
</dbReference>
<dbReference type="SMR" id="Q8EPK1"/>
<dbReference type="STRING" id="221109.gene:10734346"/>
<dbReference type="KEGG" id="oih:OB2100"/>
<dbReference type="eggNOG" id="COG1135">
    <property type="taxonomic scope" value="Bacteria"/>
</dbReference>
<dbReference type="HOGENOM" id="CLU_000604_1_3_9"/>
<dbReference type="OrthoDB" id="9802264at2"/>
<dbReference type="PhylomeDB" id="Q8EPK1"/>
<dbReference type="Proteomes" id="UP000000822">
    <property type="component" value="Chromosome"/>
</dbReference>
<dbReference type="GO" id="GO:0005886">
    <property type="term" value="C:plasma membrane"/>
    <property type="evidence" value="ECO:0007669"/>
    <property type="project" value="UniProtKB-SubCell"/>
</dbReference>
<dbReference type="GO" id="GO:0033232">
    <property type="term" value="F:ABC-type D-methionine transporter activity"/>
    <property type="evidence" value="ECO:0007669"/>
    <property type="project" value="UniProtKB-EC"/>
</dbReference>
<dbReference type="GO" id="GO:0005524">
    <property type="term" value="F:ATP binding"/>
    <property type="evidence" value="ECO:0007669"/>
    <property type="project" value="UniProtKB-KW"/>
</dbReference>
<dbReference type="GO" id="GO:0016887">
    <property type="term" value="F:ATP hydrolysis activity"/>
    <property type="evidence" value="ECO:0007669"/>
    <property type="project" value="InterPro"/>
</dbReference>
<dbReference type="CDD" id="cd03258">
    <property type="entry name" value="ABC_MetN_methionine_transporter"/>
    <property type="match status" value="1"/>
</dbReference>
<dbReference type="FunFam" id="3.40.50.300:FF:000056">
    <property type="entry name" value="Cell division ATP-binding protein FtsE"/>
    <property type="match status" value="1"/>
</dbReference>
<dbReference type="Gene3D" id="3.30.70.260">
    <property type="match status" value="1"/>
</dbReference>
<dbReference type="Gene3D" id="3.40.50.300">
    <property type="entry name" value="P-loop containing nucleotide triphosphate hydrolases"/>
    <property type="match status" value="1"/>
</dbReference>
<dbReference type="InterPro" id="IPR003593">
    <property type="entry name" value="AAA+_ATPase"/>
</dbReference>
<dbReference type="InterPro" id="IPR003439">
    <property type="entry name" value="ABC_transporter-like_ATP-bd"/>
</dbReference>
<dbReference type="InterPro" id="IPR017871">
    <property type="entry name" value="ABC_transporter-like_CS"/>
</dbReference>
<dbReference type="InterPro" id="IPR045865">
    <property type="entry name" value="ACT-like_dom_sf"/>
</dbReference>
<dbReference type="InterPro" id="IPR041701">
    <property type="entry name" value="MetN_ABC"/>
</dbReference>
<dbReference type="InterPro" id="IPR050086">
    <property type="entry name" value="MetN_ABC_transporter-like"/>
</dbReference>
<dbReference type="InterPro" id="IPR018449">
    <property type="entry name" value="NIL_domain"/>
</dbReference>
<dbReference type="InterPro" id="IPR027417">
    <property type="entry name" value="P-loop_NTPase"/>
</dbReference>
<dbReference type="PANTHER" id="PTHR43166">
    <property type="entry name" value="AMINO ACID IMPORT ATP-BINDING PROTEIN"/>
    <property type="match status" value="1"/>
</dbReference>
<dbReference type="PANTHER" id="PTHR43166:SF30">
    <property type="entry name" value="METHIONINE IMPORT ATP-BINDING PROTEIN METN"/>
    <property type="match status" value="1"/>
</dbReference>
<dbReference type="Pfam" id="PF00005">
    <property type="entry name" value="ABC_tran"/>
    <property type="match status" value="1"/>
</dbReference>
<dbReference type="Pfam" id="PF09383">
    <property type="entry name" value="NIL"/>
    <property type="match status" value="1"/>
</dbReference>
<dbReference type="SMART" id="SM00382">
    <property type="entry name" value="AAA"/>
    <property type="match status" value="1"/>
</dbReference>
<dbReference type="SMART" id="SM00930">
    <property type="entry name" value="NIL"/>
    <property type="match status" value="1"/>
</dbReference>
<dbReference type="SUPFAM" id="SSF55021">
    <property type="entry name" value="ACT-like"/>
    <property type="match status" value="1"/>
</dbReference>
<dbReference type="SUPFAM" id="SSF52540">
    <property type="entry name" value="P-loop containing nucleoside triphosphate hydrolases"/>
    <property type="match status" value="1"/>
</dbReference>
<dbReference type="PROSITE" id="PS00211">
    <property type="entry name" value="ABC_TRANSPORTER_1"/>
    <property type="match status" value="1"/>
</dbReference>
<dbReference type="PROSITE" id="PS50893">
    <property type="entry name" value="ABC_TRANSPORTER_2"/>
    <property type="match status" value="1"/>
</dbReference>
<dbReference type="PROSITE" id="PS51264">
    <property type="entry name" value="METN"/>
    <property type="match status" value="1"/>
</dbReference>
<sequence>MIQLENIEKHYESKKRRVIGVDQVSLDIKKGEIYGIVGYSGAGKSTLLRCMNVLERPTKGRVFVDGIDLLELNNKQLRKARQSIGMIFQGFYLVSSKTVVENVSFALKAAGVGKLERNKRALELLNLVGIEDKANQYPSQLSGGQKQRVSIARALANNPKVLLCDEATSALDPSTTKSILKLLKKINEQIGITIVIITHEMEVVKEICDRCAVMQNGKVIENGKTYDIFSDPNEKLTKDFIHTVLDFQLPEALLKQCNGTLLKLQFRGDIAAESVVSDMLQQHKVKGNILHGKVEYIKDKPLGVFIMEVSGDPSEISSAISYLEERIKQVEVIQHVSY</sequence>
<accession>Q8EPK1</accession>
<feature type="chain" id="PRO_0000270336" description="Methionine import ATP-binding protein MetN 1">
    <location>
        <begin position="1"/>
        <end position="338"/>
    </location>
</feature>
<feature type="domain" description="ABC transporter" evidence="1">
    <location>
        <begin position="2"/>
        <end position="241"/>
    </location>
</feature>
<feature type="binding site" evidence="1">
    <location>
        <begin position="38"/>
        <end position="45"/>
    </location>
    <ligand>
        <name>ATP</name>
        <dbReference type="ChEBI" id="CHEBI:30616"/>
    </ligand>
</feature>
<keyword id="KW-0029">Amino-acid transport</keyword>
<keyword id="KW-0067">ATP-binding</keyword>
<keyword id="KW-1003">Cell membrane</keyword>
<keyword id="KW-0472">Membrane</keyword>
<keyword id="KW-0547">Nucleotide-binding</keyword>
<keyword id="KW-1185">Reference proteome</keyword>
<keyword id="KW-1278">Translocase</keyword>
<keyword id="KW-0813">Transport</keyword>
<proteinExistence type="inferred from homology"/>
<name>METN1_OCEIH</name>
<protein>
    <recommendedName>
        <fullName evidence="1">Methionine import ATP-binding protein MetN 1</fullName>
        <ecNumber evidence="1">7.4.2.11</ecNumber>
    </recommendedName>
</protein>